<name>MAST3_HUMAN</name>
<reference key="1">
    <citation type="journal article" date="2004" name="Nature">
        <title>The DNA sequence and biology of human chromosome 19.</title>
        <authorList>
            <person name="Grimwood J."/>
            <person name="Gordon L.A."/>
            <person name="Olsen A.S."/>
            <person name="Terry A."/>
            <person name="Schmutz J."/>
            <person name="Lamerdin J.E."/>
            <person name="Hellsten U."/>
            <person name="Goodstein D."/>
            <person name="Couronne O."/>
            <person name="Tran-Gyamfi M."/>
            <person name="Aerts A."/>
            <person name="Altherr M."/>
            <person name="Ashworth L."/>
            <person name="Bajorek E."/>
            <person name="Black S."/>
            <person name="Branscomb E."/>
            <person name="Caenepeel S."/>
            <person name="Carrano A.V."/>
            <person name="Caoile C."/>
            <person name="Chan Y.M."/>
            <person name="Christensen M."/>
            <person name="Cleland C.A."/>
            <person name="Copeland A."/>
            <person name="Dalin E."/>
            <person name="Dehal P."/>
            <person name="Denys M."/>
            <person name="Detter J.C."/>
            <person name="Escobar J."/>
            <person name="Flowers D."/>
            <person name="Fotopulos D."/>
            <person name="Garcia C."/>
            <person name="Georgescu A.M."/>
            <person name="Glavina T."/>
            <person name="Gomez M."/>
            <person name="Gonzales E."/>
            <person name="Groza M."/>
            <person name="Hammon N."/>
            <person name="Hawkins T."/>
            <person name="Haydu L."/>
            <person name="Ho I."/>
            <person name="Huang W."/>
            <person name="Israni S."/>
            <person name="Jett J."/>
            <person name="Kadner K."/>
            <person name="Kimball H."/>
            <person name="Kobayashi A."/>
            <person name="Larionov V."/>
            <person name="Leem S.-H."/>
            <person name="Lopez F."/>
            <person name="Lou Y."/>
            <person name="Lowry S."/>
            <person name="Malfatti S."/>
            <person name="Martinez D."/>
            <person name="McCready P.M."/>
            <person name="Medina C."/>
            <person name="Morgan J."/>
            <person name="Nelson K."/>
            <person name="Nolan M."/>
            <person name="Ovcharenko I."/>
            <person name="Pitluck S."/>
            <person name="Pollard M."/>
            <person name="Popkie A.P."/>
            <person name="Predki P."/>
            <person name="Quan G."/>
            <person name="Ramirez L."/>
            <person name="Rash S."/>
            <person name="Retterer J."/>
            <person name="Rodriguez A."/>
            <person name="Rogers S."/>
            <person name="Salamov A."/>
            <person name="Salazar A."/>
            <person name="She X."/>
            <person name="Smith D."/>
            <person name="Slezak T."/>
            <person name="Solovyev V."/>
            <person name="Thayer N."/>
            <person name="Tice H."/>
            <person name="Tsai M."/>
            <person name="Ustaszewska A."/>
            <person name="Vo N."/>
            <person name="Wagner M."/>
            <person name="Wheeler J."/>
            <person name="Wu K."/>
            <person name="Xie G."/>
            <person name="Yang J."/>
            <person name="Dubchak I."/>
            <person name="Furey T.S."/>
            <person name="DeJong P."/>
            <person name="Dickson M."/>
            <person name="Gordon D."/>
            <person name="Eichler E.E."/>
            <person name="Pennacchio L.A."/>
            <person name="Richardson P."/>
            <person name="Stubbs L."/>
            <person name="Rokhsar D.S."/>
            <person name="Myers R.M."/>
            <person name="Rubin E.M."/>
            <person name="Lucas S.M."/>
        </authorList>
    </citation>
    <scope>NUCLEOTIDE SEQUENCE [LARGE SCALE GENOMIC DNA]</scope>
</reference>
<reference key="2">
    <citation type="journal article" date="1998" name="DNA Res.">
        <title>Prediction of the coding sequences of unidentified human genes. IX. The complete sequences of 100 new cDNA clones from brain which can code for large proteins in vitro.</title>
        <authorList>
            <person name="Nagase T."/>
            <person name="Ishikawa K."/>
            <person name="Miyajima N."/>
            <person name="Tanaka A."/>
            <person name="Kotani H."/>
            <person name="Nomura N."/>
            <person name="Ohara O."/>
        </authorList>
    </citation>
    <scope>NUCLEOTIDE SEQUENCE [LARGE SCALE MRNA] OF 2-1309</scope>
    <source>
        <tissue>Brain</tissue>
    </source>
</reference>
<reference key="3">
    <citation type="journal article" date="2005" name="J. Biol. Chem.">
        <title>Binding of PTEN to specific PDZ domains contributes to PTEN protein stability and phosphorylation by microtubule-associated serine/threonine kinases.</title>
        <authorList>
            <person name="Valiente M."/>
            <person name="Andres-Pons A."/>
            <person name="Gomar B."/>
            <person name="Torres J."/>
            <person name="Gil A."/>
            <person name="Tapparel C."/>
            <person name="Antonarakis S.E."/>
            <person name="Pulido R."/>
        </authorList>
    </citation>
    <scope>INTERACTION WITH PTEN</scope>
</reference>
<reference key="4">
    <citation type="journal article" date="2008" name="Proc. Natl. Acad. Sci. U.S.A.">
        <title>A quantitative atlas of mitotic phosphorylation.</title>
        <authorList>
            <person name="Dephoure N."/>
            <person name="Zhou C."/>
            <person name="Villen J."/>
            <person name="Beausoleil S.A."/>
            <person name="Bakalarski C.E."/>
            <person name="Elledge S.J."/>
            <person name="Gygi S.P."/>
        </authorList>
    </citation>
    <scope>PHOSPHORYLATION [LARGE SCALE ANALYSIS] AT SER-1223</scope>
    <scope>IDENTIFICATION BY MASS SPECTROMETRY [LARGE SCALE ANALYSIS]</scope>
    <source>
        <tissue>Cervix carcinoma</tissue>
    </source>
</reference>
<reference key="5">
    <citation type="journal article" date="2009" name="Anal. Chem.">
        <title>Lys-N and trypsin cover complementary parts of the phosphoproteome in a refined SCX-based approach.</title>
        <authorList>
            <person name="Gauci S."/>
            <person name="Helbig A.O."/>
            <person name="Slijper M."/>
            <person name="Krijgsveld J."/>
            <person name="Heck A.J."/>
            <person name="Mohammed S."/>
        </authorList>
    </citation>
    <scope>IDENTIFICATION BY MASS SPECTROMETRY [LARGE SCALE ANALYSIS]</scope>
</reference>
<reference key="6">
    <citation type="journal article" date="2009" name="Mol. Cell. Proteomics">
        <title>Large-scale proteomics analysis of the human kinome.</title>
        <authorList>
            <person name="Oppermann F.S."/>
            <person name="Gnad F."/>
            <person name="Olsen J.V."/>
            <person name="Hornberger R."/>
            <person name="Greff Z."/>
            <person name="Keri G."/>
            <person name="Mann M."/>
            <person name="Daub H."/>
        </authorList>
    </citation>
    <scope>PHOSPHORYLATION [LARGE SCALE ANALYSIS] AT SER-146; SER-680 AND SER-1223</scope>
    <scope>IDENTIFICATION BY MASS SPECTROMETRY [LARGE SCALE ANALYSIS]</scope>
</reference>
<reference key="7">
    <citation type="journal article" date="2009" name="Sci. Signal.">
        <title>Quantitative phosphoproteomic analysis of T cell receptor signaling reveals system-wide modulation of protein-protein interactions.</title>
        <authorList>
            <person name="Mayya V."/>
            <person name="Lundgren D.H."/>
            <person name="Hwang S.-I."/>
            <person name="Rezaul K."/>
            <person name="Wu L."/>
            <person name="Eng J.K."/>
            <person name="Rodionov V."/>
            <person name="Han D.K."/>
        </authorList>
    </citation>
    <scope>PHOSPHORYLATION [LARGE SCALE ANALYSIS] AT SER-774; SER-782; SER-792 AND SER-793</scope>
    <scope>IDENTIFICATION BY MASS SPECTROMETRY [LARGE SCALE ANALYSIS]</scope>
    <source>
        <tissue>Leukemic T-cell</tissue>
    </source>
</reference>
<reference key="8">
    <citation type="journal article" date="2013" name="J. Proteome Res.">
        <title>Toward a comprehensive characterization of a human cancer cell phosphoproteome.</title>
        <authorList>
            <person name="Zhou H."/>
            <person name="Di Palma S."/>
            <person name="Preisinger C."/>
            <person name="Peng M."/>
            <person name="Polat A.N."/>
            <person name="Heck A.J."/>
            <person name="Mohammed S."/>
        </authorList>
    </citation>
    <scope>PHOSPHORYLATION [LARGE SCALE ANALYSIS] AT SER-66; SER-85; SER-146; SER-754; SER-782 AND SER-793</scope>
    <scope>IDENTIFICATION BY MASS SPECTROMETRY [LARGE SCALE ANALYSIS]</scope>
    <source>
        <tissue>Cervix carcinoma</tissue>
        <tissue>Erythroleukemia</tissue>
    </source>
</reference>
<reference key="9">
    <citation type="journal article" date="2014" name="J. Proteomics">
        <title>An enzyme assisted RP-RPLC approach for in-depth analysis of human liver phosphoproteome.</title>
        <authorList>
            <person name="Bian Y."/>
            <person name="Song C."/>
            <person name="Cheng K."/>
            <person name="Dong M."/>
            <person name="Wang F."/>
            <person name="Huang J."/>
            <person name="Sun D."/>
            <person name="Wang L."/>
            <person name="Ye M."/>
            <person name="Zou H."/>
        </authorList>
    </citation>
    <scope>IDENTIFICATION BY MASS SPECTROMETRY [LARGE SCALE ANALYSIS]</scope>
    <source>
        <tissue>Liver</tissue>
    </source>
</reference>
<reference key="10">
    <citation type="submission" date="2005-03" db="PDB data bank">
        <title>Solution structure of putative domain of human KIAA0561 protein.</title>
        <authorList>
            <consortium name="RIKEN structural genomics initiative (RSGI)"/>
        </authorList>
    </citation>
    <scope>STRUCTURE BY NMR OF 181-281</scope>
</reference>
<reference key="11">
    <citation type="journal article" date="2007" name="Nature">
        <title>Patterns of somatic mutation in human cancer genomes.</title>
        <authorList>
            <person name="Greenman C."/>
            <person name="Stephens P."/>
            <person name="Smith R."/>
            <person name="Dalgliesh G.L."/>
            <person name="Hunter C."/>
            <person name="Bignell G."/>
            <person name="Davies H."/>
            <person name="Teague J."/>
            <person name="Butler A."/>
            <person name="Stevens C."/>
            <person name="Edkins S."/>
            <person name="O'Meara S."/>
            <person name="Vastrik I."/>
            <person name="Schmidt E.E."/>
            <person name="Avis T."/>
            <person name="Barthorpe S."/>
            <person name="Bhamra G."/>
            <person name="Buck G."/>
            <person name="Choudhury B."/>
            <person name="Clements J."/>
            <person name="Cole J."/>
            <person name="Dicks E."/>
            <person name="Forbes S."/>
            <person name="Gray K."/>
            <person name="Halliday K."/>
            <person name="Harrison R."/>
            <person name="Hills K."/>
            <person name="Hinton J."/>
            <person name="Jenkinson A."/>
            <person name="Jones D."/>
            <person name="Menzies A."/>
            <person name="Mironenko T."/>
            <person name="Perry J."/>
            <person name="Raine K."/>
            <person name="Richardson D."/>
            <person name="Shepherd R."/>
            <person name="Small A."/>
            <person name="Tofts C."/>
            <person name="Varian J."/>
            <person name="Webb T."/>
            <person name="West S."/>
            <person name="Widaa S."/>
            <person name="Yates A."/>
            <person name="Cahill D.P."/>
            <person name="Louis D.N."/>
            <person name="Goldstraw P."/>
            <person name="Nicholson A.G."/>
            <person name="Brasseur F."/>
            <person name="Looijenga L."/>
            <person name="Weber B.L."/>
            <person name="Chiew Y.-E."/>
            <person name="DeFazio A."/>
            <person name="Greaves M.F."/>
            <person name="Green A.R."/>
            <person name="Campbell P."/>
            <person name="Birney E."/>
            <person name="Easton D.F."/>
            <person name="Chenevix-Trench G."/>
            <person name="Tan M.-H."/>
            <person name="Khoo S.K."/>
            <person name="Teh B.T."/>
            <person name="Yuen S.T."/>
            <person name="Leung S.Y."/>
            <person name="Wooster R."/>
            <person name="Futreal P.A."/>
            <person name="Stratton M.R."/>
        </authorList>
    </citation>
    <scope>VARIANT [LARGE SCALE ANALYSIS] SER-883</scope>
</reference>
<reference key="12">
    <citation type="journal article" date="2021" name="Ann. Neurol.">
        <title>Pathogenic MAST3 Variants in the STK Domain Are Associated with Epilepsy.</title>
        <authorList>
            <consortium name="Undiagnosed Diseases Network (UDN)"/>
            <person name="Spinelli E."/>
            <person name="Christensen K.R."/>
            <person name="Bryant E."/>
            <person name="Schneider A."/>
            <person name="Rakotomamonjy J."/>
            <person name="Muir A.M."/>
            <person name="Giannelli J."/>
            <person name="Littlejohn R.O."/>
            <person name="Roeder E.R."/>
            <person name="Schmidt B."/>
            <person name="Wilson W.G."/>
            <person name="Marco E.J."/>
            <person name="Iwama K."/>
            <person name="Kumada S."/>
            <person name="Pisano T."/>
            <person name="Barba C."/>
            <person name="Vetro A."/>
            <person name="Brilstra E.H."/>
            <person name="van Jaarsveld R.H."/>
            <person name="Matsumoto N."/>
            <person name="Goldberg-Stern H."/>
            <person name="Carney P.W."/>
            <person name="Andrews P.I."/>
            <person name="El Achkar C.M."/>
            <person name="Berkovic S."/>
            <person name="Rodan L.H."/>
            <person name="McWalter K."/>
            <person name="Guerrini R."/>
            <person name="Scheffer I.E."/>
            <person name="Mefford H.C."/>
            <person name="Mandelstam S."/>
            <person name="Laux L."/>
            <person name="Millichap J.J."/>
            <person name="Guemez-Gamboa A."/>
            <person name="Nairn A.C."/>
            <person name="Carvill G.L."/>
        </authorList>
    </citation>
    <scope>VARIANTS DEE108 PRO-406; SER-510; SER-515; PRO-516 AND LEU-551</scope>
    <scope>INVOLVEMENT IN DEE108</scope>
    <scope>VARIANT LEU-655</scope>
</reference>
<reference key="13">
    <citation type="journal article" date="2021" name="Front. Mol. Neurosci.">
        <title>The Role of Microtubule Associated Serine/Threonine Kinase 3 Variants in Neurodevelopmental Diseases: Genotype-Phenotype Association.</title>
        <authorList>
            <person name="Shu L."/>
            <person name="Xiao N."/>
            <person name="Qin J."/>
            <person name="Tian Q."/>
            <person name="Zhang Y."/>
            <person name="Li H."/>
            <person name="Liu J."/>
            <person name="Li Q."/>
            <person name="Gu W."/>
            <person name="Wang P."/>
            <person name="Wang H."/>
            <person name="Mao X."/>
        </authorList>
    </citation>
    <scope>VARIANTS DEE108 PHE-101; LEU-104; SER-515 AND PRO-516</scope>
    <scope>INVOLVEMENT IN DEE108</scope>
</reference>
<protein>
    <recommendedName>
        <fullName>Microtubule-associated serine/threonine-protein kinase 3</fullName>
        <ecNumber>2.7.11.1</ecNumber>
    </recommendedName>
</protein>
<feature type="chain" id="PRO_0000086314" description="Microtubule-associated serine/threonine-protein kinase 3">
    <location>
        <begin position="1"/>
        <end position="1309"/>
    </location>
</feature>
<feature type="domain" description="Protein kinase" evidence="4">
    <location>
        <begin position="367"/>
        <end position="640"/>
    </location>
</feature>
<feature type="domain" description="AGC-kinase C-terminal" evidence="5">
    <location>
        <begin position="641"/>
        <end position="712"/>
    </location>
</feature>
<feature type="domain" description="PDZ" evidence="3">
    <location>
        <begin position="950"/>
        <end position="1038"/>
    </location>
</feature>
<feature type="region of interest" description="Disordered" evidence="7">
    <location>
        <begin position="1"/>
        <end position="62"/>
    </location>
</feature>
<feature type="region of interest" description="Disordered" evidence="7">
    <location>
        <begin position="88"/>
        <end position="113"/>
    </location>
</feature>
<feature type="region of interest" description="Disordered" evidence="7">
    <location>
        <begin position="136"/>
        <end position="162"/>
    </location>
</feature>
<feature type="region of interest" description="Disordered" evidence="7">
    <location>
        <begin position="337"/>
        <end position="360"/>
    </location>
</feature>
<feature type="region of interest" description="Disordered" evidence="7">
    <location>
        <begin position="756"/>
        <end position="895"/>
    </location>
</feature>
<feature type="region of interest" description="Disordered" evidence="7">
    <location>
        <begin position="908"/>
        <end position="950"/>
    </location>
</feature>
<feature type="region of interest" description="Disordered" evidence="7">
    <location>
        <begin position="1046"/>
        <end position="1245"/>
    </location>
</feature>
<feature type="compositionally biased region" description="Low complexity" evidence="7">
    <location>
        <begin position="37"/>
        <end position="53"/>
    </location>
</feature>
<feature type="compositionally biased region" description="Polar residues" evidence="7">
    <location>
        <begin position="88"/>
        <end position="99"/>
    </location>
</feature>
<feature type="compositionally biased region" description="Low complexity" evidence="7">
    <location>
        <begin position="756"/>
        <end position="767"/>
    </location>
</feature>
<feature type="compositionally biased region" description="Low complexity" evidence="7">
    <location>
        <begin position="915"/>
        <end position="942"/>
    </location>
</feature>
<feature type="compositionally biased region" description="Basic residues" evidence="7">
    <location>
        <begin position="1050"/>
        <end position="1065"/>
    </location>
</feature>
<feature type="compositionally biased region" description="Low complexity" evidence="7">
    <location>
        <begin position="1088"/>
        <end position="1121"/>
    </location>
</feature>
<feature type="compositionally biased region" description="Low complexity" evidence="7">
    <location>
        <begin position="1135"/>
        <end position="1153"/>
    </location>
</feature>
<feature type="compositionally biased region" description="Pro residues" evidence="7">
    <location>
        <begin position="1185"/>
        <end position="1213"/>
    </location>
</feature>
<feature type="compositionally biased region" description="Basic and acidic residues" evidence="7">
    <location>
        <begin position="1228"/>
        <end position="1245"/>
    </location>
</feature>
<feature type="active site" description="Proton acceptor" evidence="4 6">
    <location>
        <position position="490"/>
    </location>
</feature>
<feature type="binding site" evidence="4">
    <location>
        <begin position="373"/>
        <end position="381"/>
    </location>
    <ligand>
        <name>ATP</name>
        <dbReference type="ChEBI" id="CHEBI:30616"/>
    </ligand>
</feature>
<feature type="binding site" evidence="4">
    <location>
        <position position="396"/>
    </location>
    <ligand>
        <name>ATP</name>
        <dbReference type="ChEBI" id="CHEBI:30616"/>
    </ligand>
</feature>
<feature type="modified residue" description="Phosphoserine" evidence="16">
    <location>
        <position position="66"/>
    </location>
</feature>
<feature type="modified residue" description="Phosphoserine" evidence="16">
    <location>
        <position position="85"/>
    </location>
</feature>
<feature type="modified residue" description="Phosphoserine" evidence="14 16">
    <location>
        <position position="146"/>
    </location>
</feature>
<feature type="modified residue" description="Phosphoserine" evidence="14">
    <location>
        <position position="680"/>
    </location>
</feature>
<feature type="modified residue" description="Phosphoserine" evidence="2">
    <location>
        <position position="710"/>
    </location>
</feature>
<feature type="modified residue" description="Phosphoserine" evidence="2">
    <location>
        <position position="728"/>
    </location>
</feature>
<feature type="modified residue" description="Phosphoserine" evidence="16">
    <location>
        <position position="754"/>
    </location>
</feature>
<feature type="modified residue" description="Phosphoserine" evidence="15">
    <location>
        <position position="774"/>
    </location>
</feature>
<feature type="modified residue" description="Phosphoserine" evidence="15 16">
    <location>
        <position position="782"/>
    </location>
</feature>
<feature type="modified residue" description="Phosphoserine" evidence="15">
    <location>
        <position position="792"/>
    </location>
</feature>
<feature type="modified residue" description="Phosphoserine" evidence="15 16">
    <location>
        <position position="793"/>
    </location>
</feature>
<feature type="modified residue" description="Phosphoserine" evidence="13 14">
    <location>
        <position position="1223"/>
    </location>
</feature>
<feature type="modified residue" description="Phosphoserine" evidence="2">
    <location>
        <position position="1273"/>
    </location>
</feature>
<feature type="sequence variant" id="VAR_087834" description="In DEE108; uncertain significance." evidence="11">
    <original>S</original>
    <variation>F</variation>
    <location>
        <position position="101"/>
    </location>
</feature>
<feature type="sequence variant" id="VAR_087835" description="In DEE108." evidence="11">
    <original>S</original>
    <variation>L</variation>
    <location>
        <position position="104"/>
    </location>
</feature>
<feature type="sequence variant" id="VAR_051646" description="In dbSNP:rs35945810.">
    <original>R</original>
    <variation>Q</variation>
    <location>
        <position position="203"/>
    </location>
</feature>
<feature type="sequence variant" id="VAR_087836" description="In DEE108." evidence="10">
    <original>R</original>
    <variation>P</variation>
    <location>
        <position position="406"/>
    </location>
</feature>
<feature type="sequence variant" id="VAR_087837" description="In DEE108; dbSNP:rs1478088223." evidence="10">
    <original>G</original>
    <variation>S</variation>
    <location>
        <position position="510"/>
    </location>
</feature>
<feature type="sequence variant" id="VAR_087838" description="In DEE108; dbSNP:rs2041698726." evidence="10 11">
    <original>G</original>
    <variation>S</variation>
    <location>
        <position position="515"/>
    </location>
</feature>
<feature type="sequence variant" id="VAR_087839" description="In DEE108." evidence="10 11">
    <original>L</original>
    <variation>P</variation>
    <location>
        <position position="516"/>
    </location>
</feature>
<feature type="sequence variant" id="VAR_087840" description="In DEE108; uncertain significance." evidence="10">
    <original>V</original>
    <variation>L</variation>
    <location>
        <position position="551"/>
    </location>
</feature>
<feature type="sequence variant" id="VAR_087841" description="Found in a patient with autism spectrum disorder without history of seizures; uncertain significance." evidence="10">
    <original>F</original>
    <variation>L</variation>
    <location>
        <position position="655"/>
    </location>
</feature>
<feature type="sequence variant" id="VAR_051647" description="In dbSNP:rs8108738.">
    <original>G</original>
    <variation>S</variation>
    <location>
        <position position="861"/>
    </location>
</feature>
<feature type="sequence variant" id="VAR_040786" description="In dbSNP:rs369960905." evidence="9">
    <original>G</original>
    <variation>S</variation>
    <location>
        <position position="883"/>
    </location>
</feature>
<feature type="helix" evidence="17">
    <location>
        <begin position="185"/>
        <end position="197"/>
    </location>
</feature>
<feature type="turn" evidence="17">
    <location>
        <begin position="201"/>
        <end position="203"/>
    </location>
</feature>
<feature type="helix" evidence="17">
    <location>
        <begin position="209"/>
        <end position="230"/>
    </location>
</feature>
<feature type="helix" evidence="17">
    <location>
        <begin position="236"/>
        <end position="255"/>
    </location>
</feature>
<feature type="helix" evidence="17">
    <location>
        <begin position="259"/>
        <end position="276"/>
    </location>
</feature>
<feature type="strand" evidence="18">
    <location>
        <begin position="951"/>
        <end position="954"/>
    </location>
</feature>
<feature type="strand" evidence="18">
    <location>
        <begin position="962"/>
        <end position="975"/>
    </location>
</feature>
<feature type="strand" evidence="18">
    <location>
        <begin position="977"/>
        <end position="986"/>
    </location>
</feature>
<feature type="helix" evidence="18">
    <location>
        <begin position="991"/>
        <end position="995"/>
    </location>
</feature>
<feature type="strand" evidence="18">
    <location>
        <begin position="1002"/>
        <end position="1006"/>
    </location>
</feature>
<feature type="helix" evidence="18">
    <location>
        <begin position="1016"/>
        <end position="1025"/>
    </location>
</feature>
<feature type="strand" evidence="18">
    <location>
        <begin position="1028"/>
        <end position="1035"/>
    </location>
</feature>
<organism>
    <name type="scientific">Homo sapiens</name>
    <name type="common">Human</name>
    <dbReference type="NCBI Taxonomy" id="9606"/>
    <lineage>
        <taxon>Eukaryota</taxon>
        <taxon>Metazoa</taxon>
        <taxon>Chordata</taxon>
        <taxon>Craniata</taxon>
        <taxon>Vertebrata</taxon>
        <taxon>Euteleostomi</taxon>
        <taxon>Mammalia</taxon>
        <taxon>Eutheria</taxon>
        <taxon>Euarchontoglires</taxon>
        <taxon>Primates</taxon>
        <taxon>Haplorrhini</taxon>
        <taxon>Catarrhini</taxon>
        <taxon>Hominidae</taxon>
        <taxon>Homo</taxon>
    </lineage>
</organism>
<evidence type="ECO:0000250" key="1"/>
<evidence type="ECO:0000250" key="2">
    <source>
        <dbReference type="UniProtKB" id="Q3U214"/>
    </source>
</evidence>
<evidence type="ECO:0000255" key="3">
    <source>
        <dbReference type="PROSITE-ProRule" id="PRU00143"/>
    </source>
</evidence>
<evidence type="ECO:0000255" key="4">
    <source>
        <dbReference type="PROSITE-ProRule" id="PRU00159"/>
    </source>
</evidence>
<evidence type="ECO:0000255" key="5">
    <source>
        <dbReference type="PROSITE-ProRule" id="PRU00618"/>
    </source>
</evidence>
<evidence type="ECO:0000255" key="6">
    <source>
        <dbReference type="PROSITE-ProRule" id="PRU10027"/>
    </source>
</evidence>
<evidence type="ECO:0000256" key="7">
    <source>
        <dbReference type="SAM" id="MobiDB-lite"/>
    </source>
</evidence>
<evidence type="ECO:0000269" key="8">
    <source>
    </source>
</evidence>
<evidence type="ECO:0000269" key="9">
    <source>
    </source>
</evidence>
<evidence type="ECO:0000269" key="10">
    <source>
    </source>
</evidence>
<evidence type="ECO:0000269" key="11">
    <source>
    </source>
</evidence>
<evidence type="ECO:0000305" key="12"/>
<evidence type="ECO:0007744" key="13">
    <source>
    </source>
</evidence>
<evidence type="ECO:0007744" key="14">
    <source>
    </source>
</evidence>
<evidence type="ECO:0007744" key="15">
    <source>
    </source>
</evidence>
<evidence type="ECO:0007744" key="16">
    <source>
    </source>
</evidence>
<evidence type="ECO:0007829" key="17">
    <source>
        <dbReference type="PDB" id="1V9V"/>
    </source>
</evidence>
<evidence type="ECO:0007829" key="18">
    <source>
        <dbReference type="PDB" id="3KHF"/>
    </source>
</evidence>
<accession>O60307</accession>
<accession>Q7LDZ8</accession>
<accession>Q9UPI0</accession>
<sequence length="1309" mass="143137">MDESSLLRRRGLQKELSLPRRGRGCRSGNRKSLVVGTPSPTLSRPLSPLSVPTAGSSPLDSPRNFSAASALNFPFARRADGRRWSLASLPSSGYGTNTPSSTLSSSSSSRERLHQLPFQPTPDELHFLSKHFRSSENVLDEEGGRSPRLRPRSRSLSPGRATGTFDNEIVMMNHVYRERFPKATAQMEGRLQEFLTAYAPGARLALADGVLGFIHHQIVELARDCLAKSGENLVTSRYFLEMQEKLERLLQDAHERSDSEEVSFIVQLVRKLLIIISRPARLLECLEFDPEEFYHLLEAAEGHAREGQGIKTDLPQYIIGQLGLAKDPLEEMVPLSHLEEEQPPAPESPESRALVGQSRRKPCESDFETIKLISNGAYGAVYLVRHRDTRQRFAIKKINKQNLILRNQIQQVFVERDILTFAENPFVVSMFCSFETRRHLCMVMEYVEGGDCATLLKNMGPLPVDMARLYFAETVLALEYLHNYGIVHRDLKPDNLLITSLGHIKLTDFGLSKIGLMSMATNLYEGHIEKDAREFIDKQVCGTPEYIAPEVIFRQGYGKPVDWWAMGVVLYEFLVGCVPFFGDTPEELFGQVVSDEIMWPEGDEALPADAQDLITRLLRQSPLDRLGTGGTHEVKQHPFFLALDWAGLLRHKAEFVPQLEAEDDTSYFDTRSERYRHLGSEDDETNDEESSTEIPQFSSCSHRFSKVYSSSEFLAVQPTPTFAERSFSEDREEGWERSEVDYGRRLSADIRLRSWTSSGSSCQSSSSQPERGPSPSLLNTISLDTMPKFAFSSEDEGVGPGPAGPKRPVFILGEPDPPPAATPVMPKPSSLSADTAALSHARLRSNSIGARHSTPRPLDAGRGRRLGGPRDPAPEKSRASSSGGSGGGSGGRVPKSASVSALSLIITADDGSGGPLMSPLSPRSLSSNPSSRDSSPSRDPSPVCGSLRPPIVIHSSGKKYGFSLRAIRVYMGDSDVYTVHHVVWSVEDGSPAQEAGLRAGDLITHINGESVLGLVHMDVVELLLKSGNKISLRTTALENTSIKVGPARKNVAKGRMARRSKRSRRRETQDRRKSLFKKISKQTSVLHTSRSFSSGLHHSLSSSESLPGSPTHSLSPSPTTPCRSPAPDVPADTTASPPSASPSSSSPASPAAAGHTRPSSLHGLAAKLGPPRPKTGRRKSTSSIPPSPLACPPISAPPPRSPSPLPGHPPAPARSPRLRRGQSADKLGTGERLDGEAGRRTRGPEAELVVMRRLHLSERRDSFKKQEAVQEVSFDEPQEEATGLPTSVPQIAVEGEEAVPVALGPTGRD</sequence>
<keyword id="KW-0002">3D-structure</keyword>
<keyword id="KW-0067">ATP-binding</keyword>
<keyword id="KW-0963">Cytoplasm</keyword>
<keyword id="KW-0225">Disease variant</keyword>
<keyword id="KW-0887">Epilepsy</keyword>
<keyword id="KW-0991">Intellectual disability</keyword>
<keyword id="KW-0418">Kinase</keyword>
<keyword id="KW-0460">Magnesium</keyword>
<keyword id="KW-0547">Nucleotide-binding</keyword>
<keyword id="KW-0597">Phosphoprotein</keyword>
<keyword id="KW-1267">Proteomics identification</keyword>
<keyword id="KW-1185">Reference proteome</keyword>
<keyword id="KW-0723">Serine/threonine-protein kinase</keyword>
<keyword id="KW-0808">Transferase</keyword>
<gene>
    <name type="primary">MAST3</name>
    <name type="synonym">KIAA0561</name>
</gene>
<comment type="catalytic activity">
    <reaction>
        <text>L-seryl-[protein] + ATP = O-phospho-L-seryl-[protein] + ADP + H(+)</text>
        <dbReference type="Rhea" id="RHEA:17989"/>
        <dbReference type="Rhea" id="RHEA-COMP:9863"/>
        <dbReference type="Rhea" id="RHEA-COMP:11604"/>
        <dbReference type="ChEBI" id="CHEBI:15378"/>
        <dbReference type="ChEBI" id="CHEBI:29999"/>
        <dbReference type="ChEBI" id="CHEBI:30616"/>
        <dbReference type="ChEBI" id="CHEBI:83421"/>
        <dbReference type="ChEBI" id="CHEBI:456216"/>
        <dbReference type="EC" id="2.7.11.1"/>
    </reaction>
</comment>
<comment type="catalytic activity">
    <reaction>
        <text>L-threonyl-[protein] + ATP = O-phospho-L-threonyl-[protein] + ADP + H(+)</text>
        <dbReference type="Rhea" id="RHEA:46608"/>
        <dbReference type="Rhea" id="RHEA-COMP:11060"/>
        <dbReference type="Rhea" id="RHEA-COMP:11605"/>
        <dbReference type="ChEBI" id="CHEBI:15378"/>
        <dbReference type="ChEBI" id="CHEBI:30013"/>
        <dbReference type="ChEBI" id="CHEBI:30616"/>
        <dbReference type="ChEBI" id="CHEBI:61977"/>
        <dbReference type="ChEBI" id="CHEBI:456216"/>
        <dbReference type="EC" id="2.7.11.1"/>
    </reaction>
</comment>
<comment type="cofactor">
    <cofactor evidence="1">
        <name>Mg(2+)</name>
        <dbReference type="ChEBI" id="CHEBI:18420"/>
    </cofactor>
</comment>
<comment type="subunit">
    <text evidence="8">Interacts with PTEN.</text>
</comment>
<comment type="interaction">
    <interactant intactId="EBI-311420">
        <id>O60307</id>
    </interactant>
    <interactant intactId="EBI-696162">
        <id>P60484</id>
        <label>PTEN</label>
    </interactant>
    <organismsDiffer>false</organismsDiffer>
    <experiments>3</experiments>
</comment>
<comment type="subcellular location">
    <subcellularLocation>
        <location evidence="2">Cytoplasm</location>
    </subcellularLocation>
</comment>
<comment type="disease" evidence="10 11">
    <disease id="DI-06547">
        <name>Developmental and epileptic encephalopathy 108</name>
        <acronym>DEE108</acronym>
        <description>A form of epileptic encephalopathy, a heterogeneous group of early-onset epilepsies characterized by refractory seizures, neurodevelopmental impairment, and poor prognosis. Development is normal prior to seizure onset, after which cognitive and motor delays become apparent. DEE108 is an autosomal dominant form characterized by the onset of multiple types of seizures in the first 2 years of life.</description>
        <dbReference type="MIM" id="620115"/>
    </disease>
    <text>The disease is caused by variants affecting the gene represented in this entry.</text>
</comment>
<comment type="similarity">
    <text evidence="12">Belongs to the protein kinase superfamily. AGC Ser/Thr protein kinase family.</text>
</comment>
<comment type="caution">
    <text evidence="12">It is uncertain whether Met-1, Met-171 or Met-172 is the initiator.</text>
</comment>
<comment type="sequence caution" evidence="12">
    <conflict type="erroneous initiation">
        <sequence resource="EMBL-CDS" id="AAC62830"/>
    </conflict>
</comment>
<proteinExistence type="evidence at protein level"/>
<dbReference type="EC" id="2.7.11.1"/>
<dbReference type="EMBL" id="AC005793">
    <property type="protein sequence ID" value="AAC62830.1"/>
    <property type="status" value="ALT_INIT"/>
    <property type="molecule type" value="Genomic_DNA"/>
</dbReference>
<dbReference type="EMBL" id="AC007192">
    <property type="protein sequence ID" value="AAD22670.1"/>
    <property type="molecule type" value="Genomic_DNA"/>
</dbReference>
<dbReference type="EMBL" id="AC093054">
    <property type="status" value="NOT_ANNOTATED_CDS"/>
    <property type="molecule type" value="Genomic_DNA"/>
</dbReference>
<dbReference type="EMBL" id="AB011133">
    <property type="protein sequence ID" value="BAA25487.1"/>
    <property type="molecule type" value="mRNA"/>
</dbReference>
<dbReference type="CCDS" id="CCDS46014.1"/>
<dbReference type="RefSeq" id="NP_055831.1">
    <property type="nucleotide sequence ID" value="NM_015016.2"/>
</dbReference>
<dbReference type="PDB" id="1V9V">
    <property type="method" value="NMR"/>
    <property type="chains" value="A=181-281"/>
</dbReference>
<dbReference type="PDB" id="3KHF">
    <property type="method" value="X-ray"/>
    <property type="resolution" value="1.20 A"/>
    <property type="chains" value="A/B=948-1040"/>
</dbReference>
<dbReference type="PDBsum" id="1V9V"/>
<dbReference type="PDBsum" id="3KHF"/>
<dbReference type="BMRB" id="O60307"/>
<dbReference type="SMR" id="O60307"/>
<dbReference type="BioGRID" id="116670">
    <property type="interactions" value="127"/>
</dbReference>
<dbReference type="FunCoup" id="O60307">
    <property type="interactions" value="1047"/>
</dbReference>
<dbReference type="IntAct" id="O60307">
    <property type="interactions" value="48"/>
</dbReference>
<dbReference type="STRING" id="9606.ENSP00000262811"/>
<dbReference type="BindingDB" id="O60307"/>
<dbReference type="ChEMBL" id="CHEMBL2417352"/>
<dbReference type="GuidetoPHARMACOLOGY" id="1512"/>
<dbReference type="GlyGen" id="O60307">
    <property type="glycosylation" value="4 sites, 1 O-linked glycan (1 site)"/>
</dbReference>
<dbReference type="iPTMnet" id="O60307"/>
<dbReference type="PhosphoSitePlus" id="O60307"/>
<dbReference type="SwissPalm" id="O60307"/>
<dbReference type="BioMuta" id="MAST3"/>
<dbReference type="CPTAC" id="non-CPTAC-5671"/>
<dbReference type="jPOST" id="O60307"/>
<dbReference type="MassIVE" id="O60307"/>
<dbReference type="PaxDb" id="9606-ENSP00000262811"/>
<dbReference type="PeptideAtlas" id="O60307"/>
<dbReference type="ProteomicsDB" id="49334"/>
<dbReference type="Pumba" id="O60307"/>
<dbReference type="Antibodypedia" id="27914">
    <property type="antibodies" value="169 antibodies from 31 providers"/>
</dbReference>
<dbReference type="DNASU" id="23031"/>
<dbReference type="Ensembl" id="ENST00000262811.10">
    <property type="protein sequence ID" value="ENSP00000262811.4"/>
    <property type="gene ID" value="ENSG00000099308.13"/>
</dbReference>
<dbReference type="GeneID" id="23031"/>
<dbReference type="KEGG" id="hsa:23031"/>
<dbReference type="UCSC" id="uc002nhz.5">
    <property type="organism name" value="human"/>
</dbReference>
<dbReference type="AGR" id="HGNC:19036"/>
<dbReference type="CTD" id="23031"/>
<dbReference type="DisGeNET" id="23031"/>
<dbReference type="GeneCards" id="MAST3"/>
<dbReference type="HGNC" id="HGNC:19036">
    <property type="gene designation" value="MAST3"/>
</dbReference>
<dbReference type="HPA" id="ENSG00000099308">
    <property type="expression patterns" value="Tissue enhanced (brain)"/>
</dbReference>
<dbReference type="MalaCards" id="MAST3"/>
<dbReference type="MIM" id="612258">
    <property type="type" value="gene"/>
</dbReference>
<dbReference type="MIM" id="620115">
    <property type="type" value="phenotype"/>
</dbReference>
<dbReference type="neXtProt" id="NX_O60307"/>
<dbReference type="OpenTargets" id="ENSG00000099308"/>
<dbReference type="PharmGKB" id="PA134877725"/>
<dbReference type="VEuPathDB" id="HostDB:ENSG00000099308"/>
<dbReference type="eggNOG" id="KOG0606">
    <property type="taxonomic scope" value="Eukaryota"/>
</dbReference>
<dbReference type="GeneTree" id="ENSGT00940000157166"/>
<dbReference type="HOGENOM" id="CLU_000288_9_0_1"/>
<dbReference type="InParanoid" id="O60307"/>
<dbReference type="OMA" id="ARICWPQ"/>
<dbReference type="OrthoDB" id="10070999at2759"/>
<dbReference type="PAN-GO" id="O60307">
    <property type="GO annotations" value="4 GO annotations based on evolutionary models"/>
</dbReference>
<dbReference type="PhylomeDB" id="O60307"/>
<dbReference type="TreeFam" id="TF313149"/>
<dbReference type="PathwayCommons" id="O60307"/>
<dbReference type="SignaLink" id="O60307"/>
<dbReference type="SIGNOR" id="O60307"/>
<dbReference type="BioGRID-ORCS" id="23031">
    <property type="hits" value="28 hits in 1184 CRISPR screens"/>
</dbReference>
<dbReference type="ChiTaRS" id="MAST3">
    <property type="organism name" value="human"/>
</dbReference>
<dbReference type="EvolutionaryTrace" id="O60307"/>
<dbReference type="GenomeRNAi" id="23031"/>
<dbReference type="Pharos" id="O60307">
    <property type="development level" value="Tchem"/>
</dbReference>
<dbReference type="PRO" id="PR:O60307"/>
<dbReference type="Proteomes" id="UP000005640">
    <property type="component" value="Chromosome 19"/>
</dbReference>
<dbReference type="RNAct" id="O60307">
    <property type="molecule type" value="protein"/>
</dbReference>
<dbReference type="Bgee" id="ENSG00000099308">
    <property type="expression patterns" value="Expressed in frontal pole and 177 other cell types or tissues"/>
</dbReference>
<dbReference type="ExpressionAtlas" id="O60307">
    <property type="expression patterns" value="baseline and differential"/>
</dbReference>
<dbReference type="GO" id="GO:0005737">
    <property type="term" value="C:cytoplasm"/>
    <property type="evidence" value="ECO:0000250"/>
    <property type="project" value="UniProtKB"/>
</dbReference>
<dbReference type="GO" id="GO:0005524">
    <property type="term" value="F:ATP binding"/>
    <property type="evidence" value="ECO:0007669"/>
    <property type="project" value="UniProtKB-KW"/>
</dbReference>
<dbReference type="GO" id="GO:0000287">
    <property type="term" value="F:magnesium ion binding"/>
    <property type="evidence" value="ECO:0007669"/>
    <property type="project" value="InterPro"/>
</dbReference>
<dbReference type="GO" id="GO:0106310">
    <property type="term" value="F:protein serine kinase activity"/>
    <property type="evidence" value="ECO:0007669"/>
    <property type="project" value="RHEA"/>
</dbReference>
<dbReference type="GO" id="GO:0004674">
    <property type="term" value="F:protein serine/threonine kinase activity"/>
    <property type="evidence" value="ECO:0000318"/>
    <property type="project" value="GO_Central"/>
</dbReference>
<dbReference type="GO" id="GO:0007010">
    <property type="term" value="P:cytoskeleton organization"/>
    <property type="evidence" value="ECO:0000318"/>
    <property type="project" value="GO_Central"/>
</dbReference>
<dbReference type="GO" id="GO:0035556">
    <property type="term" value="P:intracellular signal transduction"/>
    <property type="evidence" value="ECO:0000318"/>
    <property type="project" value="GO_Central"/>
</dbReference>
<dbReference type="CDD" id="cd23075">
    <property type="entry name" value="PDZ_MAST3"/>
    <property type="match status" value="1"/>
</dbReference>
<dbReference type="CDD" id="cd05609">
    <property type="entry name" value="STKc_MAST"/>
    <property type="match status" value="1"/>
</dbReference>
<dbReference type="FunFam" id="3.30.200.20:FF:000457">
    <property type="entry name" value="Microtubule-associated serine/threonine-protein kinase"/>
    <property type="match status" value="1"/>
</dbReference>
<dbReference type="FunFam" id="1.10.510.10:FF:000012">
    <property type="entry name" value="microtubule-associated serine/threonine-protein kinase 2 isoform X1"/>
    <property type="match status" value="1"/>
</dbReference>
<dbReference type="FunFam" id="1.20.1480.20:FF:000001">
    <property type="entry name" value="microtubule-associated serine/threonine-protein kinase 4 isoform X1"/>
    <property type="match status" value="1"/>
</dbReference>
<dbReference type="FunFam" id="2.30.42.10:FF:000008">
    <property type="entry name" value="microtubule-associated serine/threonine-protein kinase 4 isoform X2"/>
    <property type="match status" value="1"/>
</dbReference>
<dbReference type="Gene3D" id="2.30.42.10">
    <property type="match status" value="1"/>
</dbReference>
<dbReference type="Gene3D" id="1.20.1480.20">
    <property type="entry name" value="MAST3 pre-PK domain-like"/>
    <property type="match status" value="1"/>
</dbReference>
<dbReference type="Gene3D" id="3.30.200.20">
    <property type="entry name" value="Phosphorylase Kinase, domain 1"/>
    <property type="match status" value="1"/>
</dbReference>
<dbReference type="Gene3D" id="1.10.510.10">
    <property type="entry name" value="Transferase(Phosphotransferase) domain 1"/>
    <property type="match status" value="1"/>
</dbReference>
<dbReference type="InterPro" id="IPR000961">
    <property type="entry name" value="AGC-kinase_C"/>
</dbReference>
<dbReference type="InterPro" id="IPR011009">
    <property type="entry name" value="Kinase-like_dom_sf"/>
</dbReference>
<dbReference type="InterPro" id="IPR037711">
    <property type="entry name" value="MAST"/>
</dbReference>
<dbReference type="InterPro" id="IPR015022">
    <property type="entry name" value="MAST_pre-PK_dom"/>
</dbReference>
<dbReference type="InterPro" id="IPR023142">
    <property type="entry name" value="MAST_pre-PK_dom_sf"/>
</dbReference>
<dbReference type="InterPro" id="IPR001478">
    <property type="entry name" value="PDZ"/>
</dbReference>
<dbReference type="InterPro" id="IPR041489">
    <property type="entry name" value="PDZ_6"/>
</dbReference>
<dbReference type="InterPro" id="IPR036034">
    <property type="entry name" value="PDZ_sf"/>
</dbReference>
<dbReference type="InterPro" id="IPR000719">
    <property type="entry name" value="Prot_kinase_dom"/>
</dbReference>
<dbReference type="InterPro" id="IPR008271">
    <property type="entry name" value="Ser/Thr_kinase_AS"/>
</dbReference>
<dbReference type="InterPro" id="IPR050236">
    <property type="entry name" value="Ser_Thr_kinase_AGC"/>
</dbReference>
<dbReference type="PANTHER" id="PTHR24356:SF140">
    <property type="entry name" value="MICROTUBULE-ASSOCIATED SERINE_THREONINE-PROTEIN KINASE 3"/>
    <property type="match status" value="1"/>
</dbReference>
<dbReference type="PANTHER" id="PTHR24356">
    <property type="entry name" value="SERINE/THREONINE-PROTEIN KINASE"/>
    <property type="match status" value="1"/>
</dbReference>
<dbReference type="Pfam" id="PF08926">
    <property type="entry name" value="DUF1908"/>
    <property type="match status" value="1"/>
</dbReference>
<dbReference type="Pfam" id="PF17820">
    <property type="entry name" value="PDZ_6"/>
    <property type="match status" value="1"/>
</dbReference>
<dbReference type="Pfam" id="PF00069">
    <property type="entry name" value="Pkinase"/>
    <property type="match status" value="1"/>
</dbReference>
<dbReference type="SMART" id="SM00228">
    <property type="entry name" value="PDZ"/>
    <property type="match status" value="1"/>
</dbReference>
<dbReference type="SMART" id="SM00220">
    <property type="entry name" value="S_TKc"/>
    <property type="match status" value="1"/>
</dbReference>
<dbReference type="SUPFAM" id="SSF140482">
    <property type="entry name" value="MAST3 pre-PK domain-like"/>
    <property type="match status" value="1"/>
</dbReference>
<dbReference type="SUPFAM" id="SSF50156">
    <property type="entry name" value="PDZ domain-like"/>
    <property type="match status" value="1"/>
</dbReference>
<dbReference type="SUPFAM" id="SSF56112">
    <property type="entry name" value="Protein kinase-like (PK-like)"/>
    <property type="match status" value="1"/>
</dbReference>
<dbReference type="PROSITE" id="PS51285">
    <property type="entry name" value="AGC_KINASE_CTER"/>
    <property type="match status" value="1"/>
</dbReference>
<dbReference type="PROSITE" id="PS50106">
    <property type="entry name" value="PDZ"/>
    <property type="match status" value="1"/>
</dbReference>
<dbReference type="PROSITE" id="PS50011">
    <property type="entry name" value="PROTEIN_KINASE_DOM"/>
    <property type="match status" value="1"/>
</dbReference>
<dbReference type="PROSITE" id="PS00108">
    <property type="entry name" value="PROTEIN_KINASE_ST"/>
    <property type="match status" value="1"/>
</dbReference>